<name>SYP_DESHD</name>
<organism>
    <name type="scientific">Desulfitobacterium hafniense (strain DSM 10664 / DCB-2)</name>
    <dbReference type="NCBI Taxonomy" id="272564"/>
    <lineage>
        <taxon>Bacteria</taxon>
        <taxon>Bacillati</taxon>
        <taxon>Bacillota</taxon>
        <taxon>Clostridia</taxon>
        <taxon>Eubacteriales</taxon>
        <taxon>Desulfitobacteriaceae</taxon>
        <taxon>Desulfitobacterium</taxon>
    </lineage>
</organism>
<feature type="chain" id="PRO_1000185497" description="Proline--tRNA ligase">
    <location>
        <begin position="1"/>
        <end position="575"/>
    </location>
</feature>
<proteinExistence type="inferred from homology"/>
<keyword id="KW-0030">Aminoacyl-tRNA synthetase</keyword>
<keyword id="KW-0067">ATP-binding</keyword>
<keyword id="KW-0963">Cytoplasm</keyword>
<keyword id="KW-0436">Ligase</keyword>
<keyword id="KW-0547">Nucleotide-binding</keyword>
<keyword id="KW-0648">Protein biosynthesis</keyword>
<sequence length="575" mass="63724">MRVSQILNPTLREVPAEAEVVSHQLLVRAGLIRKSAAGIYTYLPLGLRVLRKIEQIVREEMDAKGGQEVLLPIIQPAELWRESGRWDLYGQELMRLNDRHNREFCLGPTHEEIITDLIRGEIRSYKQLPLLLYQIQNKYRDERRPRFGLMRGREFIMKDLYSFDRDEAGLAESYKKMYDAYTRIFTRCGLTFRPVEADAGAIGGTGGTHEFMVLAESGEAAVVYCPDCDYAANVEKAECKPAPVAGDAPVGAYRGVDTPGTKTIEQVAEFLKVSKSDLVKSLLYQGDDKLFLILVRGDREINEIKVNNALGPFINLQLAGPEVVLEKLGCEPGYVGPIGAPKNLTVVADLEVPLMAKAVCGANAEDKHYVDAVPEKDFRIDQILDLRMVNAGEPCPQCGSPLKEARGIEVGQVFKLGTKYSKALNAVFLDENGAEHPCVMGCYGIGVSRTMAAAIEQNNDKDGIIWPIPIAPYHVIVVPVNMKDDQVRETGEALYQELLKLGVEAVLDDRDERPGVKFKDADLVGYPLRVTVGSKTLANGEVELRDRKTGEVQLVKVEELAGRIQGMIREALGVK</sequence>
<accession>B8FR28</accession>
<gene>
    <name evidence="1" type="primary">proS</name>
    <name type="ordered locus">Dhaf_3699</name>
</gene>
<dbReference type="EC" id="6.1.1.15" evidence="1"/>
<dbReference type="EMBL" id="CP001336">
    <property type="protein sequence ID" value="ACL21715.1"/>
    <property type="molecule type" value="Genomic_DNA"/>
</dbReference>
<dbReference type="RefSeq" id="WP_015944736.1">
    <property type="nucleotide sequence ID" value="NC_011830.1"/>
</dbReference>
<dbReference type="SMR" id="B8FR28"/>
<dbReference type="KEGG" id="dhd:Dhaf_3699"/>
<dbReference type="HOGENOM" id="CLU_016739_0_0_9"/>
<dbReference type="Proteomes" id="UP000007726">
    <property type="component" value="Chromosome"/>
</dbReference>
<dbReference type="GO" id="GO:0005829">
    <property type="term" value="C:cytosol"/>
    <property type="evidence" value="ECO:0007669"/>
    <property type="project" value="TreeGrafter"/>
</dbReference>
<dbReference type="GO" id="GO:0002161">
    <property type="term" value="F:aminoacyl-tRNA deacylase activity"/>
    <property type="evidence" value="ECO:0007669"/>
    <property type="project" value="InterPro"/>
</dbReference>
<dbReference type="GO" id="GO:0005524">
    <property type="term" value="F:ATP binding"/>
    <property type="evidence" value="ECO:0007669"/>
    <property type="project" value="UniProtKB-UniRule"/>
</dbReference>
<dbReference type="GO" id="GO:0140096">
    <property type="term" value="F:catalytic activity, acting on a protein"/>
    <property type="evidence" value="ECO:0007669"/>
    <property type="project" value="UniProtKB-ARBA"/>
</dbReference>
<dbReference type="GO" id="GO:0004827">
    <property type="term" value="F:proline-tRNA ligase activity"/>
    <property type="evidence" value="ECO:0007669"/>
    <property type="project" value="UniProtKB-UniRule"/>
</dbReference>
<dbReference type="GO" id="GO:0016740">
    <property type="term" value="F:transferase activity"/>
    <property type="evidence" value="ECO:0007669"/>
    <property type="project" value="UniProtKB-ARBA"/>
</dbReference>
<dbReference type="GO" id="GO:0006433">
    <property type="term" value="P:prolyl-tRNA aminoacylation"/>
    <property type="evidence" value="ECO:0007669"/>
    <property type="project" value="UniProtKB-UniRule"/>
</dbReference>
<dbReference type="CDD" id="cd04334">
    <property type="entry name" value="ProRS-INS"/>
    <property type="match status" value="1"/>
</dbReference>
<dbReference type="CDD" id="cd00861">
    <property type="entry name" value="ProRS_anticodon_short"/>
    <property type="match status" value="1"/>
</dbReference>
<dbReference type="CDD" id="cd00779">
    <property type="entry name" value="ProRS_core_prok"/>
    <property type="match status" value="1"/>
</dbReference>
<dbReference type="FunFam" id="3.30.930.10:FF:000065">
    <property type="entry name" value="Proline--tRNA ligase"/>
    <property type="match status" value="1"/>
</dbReference>
<dbReference type="FunFam" id="3.30.930.10:FF:000066">
    <property type="entry name" value="Proline--tRNA ligase"/>
    <property type="match status" value="1"/>
</dbReference>
<dbReference type="FunFam" id="3.40.50.800:FF:000011">
    <property type="entry name" value="Proline--tRNA ligase"/>
    <property type="match status" value="1"/>
</dbReference>
<dbReference type="Gene3D" id="3.40.50.800">
    <property type="entry name" value="Anticodon-binding domain"/>
    <property type="match status" value="1"/>
</dbReference>
<dbReference type="Gene3D" id="3.30.930.10">
    <property type="entry name" value="Bira Bifunctional Protein, Domain 2"/>
    <property type="match status" value="2"/>
</dbReference>
<dbReference type="Gene3D" id="3.90.960.10">
    <property type="entry name" value="YbaK/aminoacyl-tRNA synthetase-associated domain"/>
    <property type="match status" value="1"/>
</dbReference>
<dbReference type="HAMAP" id="MF_01569">
    <property type="entry name" value="Pro_tRNA_synth_type1"/>
    <property type="match status" value="1"/>
</dbReference>
<dbReference type="InterPro" id="IPR002314">
    <property type="entry name" value="aa-tRNA-synt_IIb"/>
</dbReference>
<dbReference type="InterPro" id="IPR006195">
    <property type="entry name" value="aa-tRNA-synth_II"/>
</dbReference>
<dbReference type="InterPro" id="IPR045864">
    <property type="entry name" value="aa-tRNA-synth_II/BPL/LPL"/>
</dbReference>
<dbReference type="InterPro" id="IPR004154">
    <property type="entry name" value="Anticodon-bd"/>
</dbReference>
<dbReference type="InterPro" id="IPR036621">
    <property type="entry name" value="Anticodon-bd_dom_sf"/>
</dbReference>
<dbReference type="InterPro" id="IPR002316">
    <property type="entry name" value="Pro-tRNA-ligase_IIa"/>
</dbReference>
<dbReference type="InterPro" id="IPR004500">
    <property type="entry name" value="Pro-tRNA-synth_IIa_bac-type"/>
</dbReference>
<dbReference type="InterPro" id="IPR023717">
    <property type="entry name" value="Pro-tRNA-Synthase_IIa_type1"/>
</dbReference>
<dbReference type="InterPro" id="IPR050062">
    <property type="entry name" value="Pro-tRNA_synthetase"/>
</dbReference>
<dbReference type="InterPro" id="IPR044140">
    <property type="entry name" value="ProRS_anticodon_short"/>
</dbReference>
<dbReference type="InterPro" id="IPR033730">
    <property type="entry name" value="ProRS_core_prok"/>
</dbReference>
<dbReference type="InterPro" id="IPR036754">
    <property type="entry name" value="YbaK/aa-tRNA-synt-asso_dom_sf"/>
</dbReference>
<dbReference type="InterPro" id="IPR007214">
    <property type="entry name" value="YbaK/aa-tRNA-synth-assoc-dom"/>
</dbReference>
<dbReference type="NCBIfam" id="NF006625">
    <property type="entry name" value="PRK09194.1"/>
    <property type="match status" value="1"/>
</dbReference>
<dbReference type="NCBIfam" id="TIGR00409">
    <property type="entry name" value="proS_fam_II"/>
    <property type="match status" value="1"/>
</dbReference>
<dbReference type="PANTHER" id="PTHR42753">
    <property type="entry name" value="MITOCHONDRIAL RIBOSOME PROTEIN L39/PROLYL-TRNA LIGASE FAMILY MEMBER"/>
    <property type="match status" value="1"/>
</dbReference>
<dbReference type="PANTHER" id="PTHR42753:SF2">
    <property type="entry name" value="PROLINE--TRNA LIGASE"/>
    <property type="match status" value="1"/>
</dbReference>
<dbReference type="Pfam" id="PF03129">
    <property type="entry name" value="HGTP_anticodon"/>
    <property type="match status" value="1"/>
</dbReference>
<dbReference type="Pfam" id="PF00587">
    <property type="entry name" value="tRNA-synt_2b"/>
    <property type="match status" value="1"/>
</dbReference>
<dbReference type="Pfam" id="PF04073">
    <property type="entry name" value="tRNA_edit"/>
    <property type="match status" value="1"/>
</dbReference>
<dbReference type="PIRSF" id="PIRSF001535">
    <property type="entry name" value="ProRS_1"/>
    <property type="match status" value="1"/>
</dbReference>
<dbReference type="PRINTS" id="PR01046">
    <property type="entry name" value="TRNASYNTHPRO"/>
</dbReference>
<dbReference type="SUPFAM" id="SSF52954">
    <property type="entry name" value="Class II aaRS ABD-related"/>
    <property type="match status" value="1"/>
</dbReference>
<dbReference type="SUPFAM" id="SSF55681">
    <property type="entry name" value="Class II aaRS and biotin synthetases"/>
    <property type="match status" value="1"/>
</dbReference>
<dbReference type="SUPFAM" id="SSF55826">
    <property type="entry name" value="YbaK/ProRS associated domain"/>
    <property type="match status" value="1"/>
</dbReference>
<dbReference type="PROSITE" id="PS50862">
    <property type="entry name" value="AA_TRNA_LIGASE_II"/>
    <property type="match status" value="1"/>
</dbReference>
<evidence type="ECO:0000255" key="1">
    <source>
        <dbReference type="HAMAP-Rule" id="MF_01569"/>
    </source>
</evidence>
<protein>
    <recommendedName>
        <fullName evidence="1">Proline--tRNA ligase</fullName>
        <ecNumber evidence="1">6.1.1.15</ecNumber>
    </recommendedName>
    <alternativeName>
        <fullName evidence="1">Prolyl-tRNA synthetase</fullName>
        <shortName evidence="1">ProRS</shortName>
    </alternativeName>
</protein>
<reference key="1">
    <citation type="journal article" date="2012" name="BMC Microbiol.">
        <title>Genome sequence of Desulfitobacterium hafniense DCB-2, a Gram-positive anaerobe capable of dehalogenation and metal reduction.</title>
        <authorList>
            <person name="Kim S.H."/>
            <person name="Harzman C."/>
            <person name="Davis J.K."/>
            <person name="Hutcheson R."/>
            <person name="Broderick J.B."/>
            <person name="Marsh T.L."/>
            <person name="Tiedje J.M."/>
        </authorList>
    </citation>
    <scope>NUCLEOTIDE SEQUENCE [LARGE SCALE GENOMIC DNA]</scope>
    <source>
        <strain>DSM 10664 / DCB-2</strain>
    </source>
</reference>
<comment type="function">
    <text evidence="1">Catalyzes the attachment of proline to tRNA(Pro) in a two-step reaction: proline is first activated by ATP to form Pro-AMP and then transferred to the acceptor end of tRNA(Pro). As ProRS can inadvertently accommodate and process non-cognate amino acids such as alanine and cysteine, to avoid such errors it has two additional distinct editing activities against alanine. One activity is designated as 'pretransfer' editing and involves the tRNA(Pro)-independent hydrolysis of activated Ala-AMP. The other activity is designated 'posttransfer' editing and involves deacylation of mischarged Ala-tRNA(Pro). The misacylated Cys-tRNA(Pro) is not edited by ProRS.</text>
</comment>
<comment type="catalytic activity">
    <reaction evidence="1">
        <text>tRNA(Pro) + L-proline + ATP = L-prolyl-tRNA(Pro) + AMP + diphosphate</text>
        <dbReference type="Rhea" id="RHEA:14305"/>
        <dbReference type="Rhea" id="RHEA-COMP:9700"/>
        <dbReference type="Rhea" id="RHEA-COMP:9702"/>
        <dbReference type="ChEBI" id="CHEBI:30616"/>
        <dbReference type="ChEBI" id="CHEBI:33019"/>
        <dbReference type="ChEBI" id="CHEBI:60039"/>
        <dbReference type="ChEBI" id="CHEBI:78442"/>
        <dbReference type="ChEBI" id="CHEBI:78532"/>
        <dbReference type="ChEBI" id="CHEBI:456215"/>
        <dbReference type="EC" id="6.1.1.15"/>
    </reaction>
</comment>
<comment type="subunit">
    <text evidence="1">Homodimer.</text>
</comment>
<comment type="subcellular location">
    <subcellularLocation>
        <location evidence="1">Cytoplasm</location>
    </subcellularLocation>
</comment>
<comment type="domain">
    <text evidence="1">Consists of three domains: the N-terminal catalytic domain, the editing domain and the C-terminal anticodon-binding domain.</text>
</comment>
<comment type="similarity">
    <text evidence="1">Belongs to the class-II aminoacyl-tRNA synthetase family. ProS type 1 subfamily.</text>
</comment>